<gene>
    <name evidence="1" type="primary">eno</name>
    <name type="ordered locus">ECH_0544</name>
</gene>
<organism>
    <name type="scientific">Ehrlichia chaffeensis (strain ATCC CRL-10679 / Arkansas)</name>
    <dbReference type="NCBI Taxonomy" id="205920"/>
    <lineage>
        <taxon>Bacteria</taxon>
        <taxon>Pseudomonadati</taxon>
        <taxon>Pseudomonadota</taxon>
        <taxon>Alphaproteobacteria</taxon>
        <taxon>Rickettsiales</taxon>
        <taxon>Anaplasmataceae</taxon>
        <taxon>Ehrlichia</taxon>
    </lineage>
</organism>
<name>ENO_EHRCR</name>
<dbReference type="EC" id="4.2.1.11" evidence="1"/>
<dbReference type="EMBL" id="CP000236">
    <property type="protein sequence ID" value="ABD45381.1"/>
    <property type="molecule type" value="Genomic_DNA"/>
</dbReference>
<dbReference type="RefSeq" id="WP_006010553.1">
    <property type="nucleotide sequence ID" value="NC_007799.1"/>
</dbReference>
<dbReference type="SMR" id="Q2GGS6"/>
<dbReference type="STRING" id="205920.ECH_0544"/>
<dbReference type="KEGG" id="ech:ECH_0544"/>
<dbReference type="eggNOG" id="COG0148">
    <property type="taxonomic scope" value="Bacteria"/>
</dbReference>
<dbReference type="HOGENOM" id="CLU_031223_2_1_5"/>
<dbReference type="OrthoDB" id="9804716at2"/>
<dbReference type="UniPathway" id="UPA00109">
    <property type="reaction ID" value="UER00187"/>
</dbReference>
<dbReference type="Proteomes" id="UP000008320">
    <property type="component" value="Chromosome"/>
</dbReference>
<dbReference type="GO" id="GO:0009986">
    <property type="term" value="C:cell surface"/>
    <property type="evidence" value="ECO:0007669"/>
    <property type="project" value="UniProtKB-SubCell"/>
</dbReference>
<dbReference type="GO" id="GO:0005576">
    <property type="term" value="C:extracellular region"/>
    <property type="evidence" value="ECO:0007669"/>
    <property type="project" value="UniProtKB-SubCell"/>
</dbReference>
<dbReference type="GO" id="GO:0000015">
    <property type="term" value="C:phosphopyruvate hydratase complex"/>
    <property type="evidence" value="ECO:0007669"/>
    <property type="project" value="InterPro"/>
</dbReference>
<dbReference type="GO" id="GO:0000287">
    <property type="term" value="F:magnesium ion binding"/>
    <property type="evidence" value="ECO:0007669"/>
    <property type="project" value="UniProtKB-UniRule"/>
</dbReference>
<dbReference type="GO" id="GO:0004634">
    <property type="term" value="F:phosphopyruvate hydratase activity"/>
    <property type="evidence" value="ECO:0007669"/>
    <property type="project" value="UniProtKB-UniRule"/>
</dbReference>
<dbReference type="GO" id="GO:0006096">
    <property type="term" value="P:glycolytic process"/>
    <property type="evidence" value="ECO:0007669"/>
    <property type="project" value="UniProtKB-UniRule"/>
</dbReference>
<dbReference type="CDD" id="cd03313">
    <property type="entry name" value="enolase"/>
    <property type="match status" value="1"/>
</dbReference>
<dbReference type="Gene3D" id="3.20.20.120">
    <property type="entry name" value="Enolase-like C-terminal domain"/>
    <property type="match status" value="1"/>
</dbReference>
<dbReference type="Gene3D" id="3.30.390.10">
    <property type="entry name" value="Enolase-like, N-terminal domain"/>
    <property type="match status" value="1"/>
</dbReference>
<dbReference type="HAMAP" id="MF_00318">
    <property type="entry name" value="Enolase"/>
    <property type="match status" value="1"/>
</dbReference>
<dbReference type="InterPro" id="IPR000941">
    <property type="entry name" value="Enolase"/>
</dbReference>
<dbReference type="InterPro" id="IPR036849">
    <property type="entry name" value="Enolase-like_C_sf"/>
</dbReference>
<dbReference type="InterPro" id="IPR029017">
    <property type="entry name" value="Enolase-like_N"/>
</dbReference>
<dbReference type="InterPro" id="IPR020810">
    <property type="entry name" value="Enolase_C"/>
</dbReference>
<dbReference type="InterPro" id="IPR020809">
    <property type="entry name" value="Enolase_CS"/>
</dbReference>
<dbReference type="InterPro" id="IPR020811">
    <property type="entry name" value="Enolase_N"/>
</dbReference>
<dbReference type="NCBIfam" id="TIGR01060">
    <property type="entry name" value="eno"/>
    <property type="match status" value="1"/>
</dbReference>
<dbReference type="PANTHER" id="PTHR11902">
    <property type="entry name" value="ENOLASE"/>
    <property type="match status" value="1"/>
</dbReference>
<dbReference type="PANTHER" id="PTHR11902:SF1">
    <property type="entry name" value="ENOLASE"/>
    <property type="match status" value="1"/>
</dbReference>
<dbReference type="Pfam" id="PF00113">
    <property type="entry name" value="Enolase_C"/>
    <property type="match status" value="1"/>
</dbReference>
<dbReference type="Pfam" id="PF03952">
    <property type="entry name" value="Enolase_N"/>
    <property type="match status" value="1"/>
</dbReference>
<dbReference type="PIRSF" id="PIRSF001400">
    <property type="entry name" value="Enolase"/>
    <property type="match status" value="1"/>
</dbReference>
<dbReference type="PRINTS" id="PR00148">
    <property type="entry name" value="ENOLASE"/>
</dbReference>
<dbReference type="SFLD" id="SFLDS00001">
    <property type="entry name" value="Enolase"/>
    <property type="match status" value="1"/>
</dbReference>
<dbReference type="SFLD" id="SFLDF00002">
    <property type="entry name" value="enolase"/>
    <property type="match status" value="1"/>
</dbReference>
<dbReference type="SMART" id="SM01192">
    <property type="entry name" value="Enolase_C"/>
    <property type="match status" value="1"/>
</dbReference>
<dbReference type="SMART" id="SM01193">
    <property type="entry name" value="Enolase_N"/>
    <property type="match status" value="1"/>
</dbReference>
<dbReference type="SUPFAM" id="SSF51604">
    <property type="entry name" value="Enolase C-terminal domain-like"/>
    <property type="match status" value="1"/>
</dbReference>
<dbReference type="SUPFAM" id="SSF54826">
    <property type="entry name" value="Enolase N-terminal domain-like"/>
    <property type="match status" value="1"/>
</dbReference>
<dbReference type="PROSITE" id="PS00164">
    <property type="entry name" value="ENOLASE"/>
    <property type="match status" value="1"/>
</dbReference>
<proteinExistence type="inferred from homology"/>
<comment type="function">
    <text evidence="1">Catalyzes the reversible conversion of 2-phosphoglycerate (2-PG) into phosphoenolpyruvate (PEP). It is essential for the degradation of carbohydrates via glycolysis.</text>
</comment>
<comment type="catalytic activity">
    <reaction evidence="1">
        <text>(2R)-2-phosphoglycerate = phosphoenolpyruvate + H2O</text>
        <dbReference type="Rhea" id="RHEA:10164"/>
        <dbReference type="ChEBI" id="CHEBI:15377"/>
        <dbReference type="ChEBI" id="CHEBI:58289"/>
        <dbReference type="ChEBI" id="CHEBI:58702"/>
        <dbReference type="EC" id="4.2.1.11"/>
    </reaction>
</comment>
<comment type="cofactor">
    <cofactor evidence="1">
        <name>Mg(2+)</name>
        <dbReference type="ChEBI" id="CHEBI:18420"/>
    </cofactor>
    <text evidence="1">Binds a second Mg(2+) ion via substrate during catalysis.</text>
</comment>
<comment type="pathway">
    <text evidence="1">Carbohydrate degradation; glycolysis; pyruvate from D-glyceraldehyde 3-phosphate: step 4/5.</text>
</comment>
<comment type="subcellular location">
    <subcellularLocation>
        <location evidence="1">Cytoplasm</location>
    </subcellularLocation>
    <subcellularLocation>
        <location evidence="1">Secreted</location>
    </subcellularLocation>
    <subcellularLocation>
        <location evidence="1">Cell surface</location>
    </subcellularLocation>
    <text evidence="1">Fractions of enolase are present in both the cytoplasm and on the cell surface.</text>
</comment>
<comment type="similarity">
    <text evidence="1">Belongs to the enolase family.</text>
</comment>
<reference key="1">
    <citation type="journal article" date="2006" name="PLoS Genet.">
        <title>Comparative genomics of emerging human ehrlichiosis agents.</title>
        <authorList>
            <person name="Dunning Hotopp J.C."/>
            <person name="Lin M."/>
            <person name="Madupu R."/>
            <person name="Crabtree J."/>
            <person name="Angiuoli S.V."/>
            <person name="Eisen J.A."/>
            <person name="Seshadri R."/>
            <person name="Ren Q."/>
            <person name="Wu M."/>
            <person name="Utterback T.R."/>
            <person name="Smith S."/>
            <person name="Lewis M."/>
            <person name="Khouri H."/>
            <person name="Zhang C."/>
            <person name="Niu H."/>
            <person name="Lin Q."/>
            <person name="Ohashi N."/>
            <person name="Zhi N."/>
            <person name="Nelson W.C."/>
            <person name="Brinkac L.M."/>
            <person name="Dodson R.J."/>
            <person name="Rosovitz M.J."/>
            <person name="Sundaram J.P."/>
            <person name="Daugherty S.C."/>
            <person name="Davidsen T."/>
            <person name="Durkin A.S."/>
            <person name="Gwinn M.L."/>
            <person name="Haft D.H."/>
            <person name="Selengut J.D."/>
            <person name="Sullivan S.A."/>
            <person name="Zafar N."/>
            <person name="Zhou L."/>
            <person name="Benahmed F."/>
            <person name="Forberger H."/>
            <person name="Halpin R."/>
            <person name="Mulligan S."/>
            <person name="Robinson J."/>
            <person name="White O."/>
            <person name="Rikihisa Y."/>
            <person name="Tettelin H."/>
        </authorList>
    </citation>
    <scope>NUCLEOTIDE SEQUENCE [LARGE SCALE GENOMIC DNA]</scope>
    <source>
        <strain>ATCC CRL-10679 / Arkansas</strain>
    </source>
</reference>
<keyword id="KW-0963">Cytoplasm</keyword>
<keyword id="KW-0324">Glycolysis</keyword>
<keyword id="KW-0456">Lyase</keyword>
<keyword id="KW-0460">Magnesium</keyword>
<keyword id="KW-0479">Metal-binding</keyword>
<keyword id="KW-1185">Reference proteome</keyword>
<keyword id="KW-0964">Secreted</keyword>
<accession>Q2GGS6</accession>
<protein>
    <recommendedName>
        <fullName evidence="1">Enolase</fullName>
        <ecNumber evidence="1">4.2.1.11</ecNumber>
    </recommendedName>
    <alternativeName>
        <fullName evidence="1">2-phospho-D-glycerate hydro-lyase</fullName>
    </alternativeName>
    <alternativeName>
        <fullName evidence="1">2-phosphoglycerate dehydratase</fullName>
    </alternativeName>
</protein>
<feature type="chain" id="PRO_0000267030" description="Enolase">
    <location>
        <begin position="1"/>
        <end position="421"/>
    </location>
</feature>
<feature type="active site" description="Proton donor" evidence="1">
    <location>
        <position position="207"/>
    </location>
</feature>
<feature type="active site" description="Proton acceptor" evidence="1">
    <location>
        <position position="337"/>
    </location>
</feature>
<feature type="binding site" evidence="1">
    <location>
        <position position="165"/>
    </location>
    <ligand>
        <name>(2R)-2-phosphoglycerate</name>
        <dbReference type="ChEBI" id="CHEBI:58289"/>
    </ligand>
</feature>
<feature type="binding site" evidence="1">
    <location>
        <position position="244"/>
    </location>
    <ligand>
        <name>Mg(2+)</name>
        <dbReference type="ChEBI" id="CHEBI:18420"/>
    </ligand>
</feature>
<feature type="binding site" evidence="1">
    <location>
        <position position="285"/>
    </location>
    <ligand>
        <name>Mg(2+)</name>
        <dbReference type="ChEBI" id="CHEBI:18420"/>
    </ligand>
</feature>
<feature type="binding site" evidence="1">
    <location>
        <position position="312"/>
    </location>
    <ligand>
        <name>Mg(2+)</name>
        <dbReference type="ChEBI" id="CHEBI:18420"/>
    </ligand>
</feature>
<feature type="binding site" evidence="1">
    <location>
        <position position="337"/>
    </location>
    <ligand>
        <name>(2R)-2-phosphoglycerate</name>
        <dbReference type="ChEBI" id="CHEBI:58289"/>
    </ligand>
</feature>
<feature type="binding site" evidence="1">
    <location>
        <position position="366"/>
    </location>
    <ligand>
        <name>(2R)-2-phosphoglycerate</name>
        <dbReference type="ChEBI" id="CHEBI:58289"/>
    </ligand>
</feature>
<feature type="binding site" evidence="1">
    <location>
        <position position="367"/>
    </location>
    <ligand>
        <name>(2R)-2-phosphoglycerate</name>
        <dbReference type="ChEBI" id="CHEBI:58289"/>
    </ligand>
</feature>
<feature type="binding site" evidence="1">
    <location>
        <position position="388"/>
    </location>
    <ligand>
        <name>(2R)-2-phosphoglycerate</name>
        <dbReference type="ChEBI" id="CHEBI:58289"/>
    </ligand>
</feature>
<sequence>MFNITISKILARQILDSRGYPTIEVETILSNDIKAKACVPSGASVGKFEAVELRDNDKNFYNGYGVTKAINLINSEVAPQIISMNTLNQEKIDNALIEIDGTDNKSRIGANSTLAISLAIAKAAALALNIPLYQYLGGITAKVLPTPLINVINGGMHADNNLDFQEFMIIPNGANKFEDAIRMSAEVFFQLKQILKHKKLNTNVGDEGGFAPNIRINTEVFEIIIDAVEKSGYKMYEDFSLGLDIAASTFYKDQKYKFADYELNTQELVEYYKKIISQYPIISIEDPIAEEDINGWKLITQELGNKIQIVGDDLFVTNCKLIQNGIDNNMANAVLIKPNQIGTLTETFNAIRLAQKNNYNVIISHRSGETEDTTISHIAVATNCGQIKTGSLSRSERLAKYNELLYIEKLLGISAIYYGSL</sequence>
<evidence type="ECO:0000255" key="1">
    <source>
        <dbReference type="HAMAP-Rule" id="MF_00318"/>
    </source>
</evidence>